<sequence>MRILLSNDDGVHAPGIQTLAKALREFADVQVVAPDRNRSGASNSLTLESSLRTFTFENGDIAVQMGTPTDCVYLGVNALMRPRPDIVVSGINAGPNLGDDVIYSGTVAAAMEGRHLGFPALAVSLDGHKHYDTAAAVTCSILRALCKEPLRTGRILNINVPDLPLDQIKGIRVTRCGTRHPADQVIPQQDPRGNTLYWIGPPGGKCDAGPGTDFAAVDEGYVSITPLHVDLTAHSAQDVVSDWLNSVGVGTQW</sequence>
<comment type="function">
    <text evidence="1">Nucleotidase with a broad substrate specificity as it can dephosphorylate various ribo- and deoxyribonucleoside 5'-monophosphates and ribonucleoside 3'-monophosphates with highest affinity to 3'-AMP. Also hydrolyzes polyphosphate (exopolyphosphatase activity) with the preference for short-chain-length substrates (P20-25). Might be involved in the regulation of dNTP and NTP pools, and in the turnover of 3'-mononucleotides produced by numerous intracellular RNases (T1, T2, and F) during the degradation of various RNAs.</text>
</comment>
<comment type="catalytic activity">
    <reaction evidence="1">
        <text>a ribonucleoside 5'-phosphate + H2O = a ribonucleoside + phosphate</text>
        <dbReference type="Rhea" id="RHEA:12484"/>
        <dbReference type="ChEBI" id="CHEBI:15377"/>
        <dbReference type="ChEBI" id="CHEBI:18254"/>
        <dbReference type="ChEBI" id="CHEBI:43474"/>
        <dbReference type="ChEBI" id="CHEBI:58043"/>
        <dbReference type="EC" id="3.1.3.5"/>
    </reaction>
</comment>
<comment type="catalytic activity">
    <reaction evidence="1">
        <text>a ribonucleoside 3'-phosphate + H2O = a ribonucleoside + phosphate</text>
        <dbReference type="Rhea" id="RHEA:10144"/>
        <dbReference type="ChEBI" id="CHEBI:13197"/>
        <dbReference type="ChEBI" id="CHEBI:15377"/>
        <dbReference type="ChEBI" id="CHEBI:18254"/>
        <dbReference type="ChEBI" id="CHEBI:43474"/>
        <dbReference type="EC" id="3.1.3.6"/>
    </reaction>
</comment>
<comment type="catalytic activity">
    <reaction evidence="1">
        <text>[phosphate](n) + H2O = [phosphate](n-1) + phosphate + H(+)</text>
        <dbReference type="Rhea" id="RHEA:21528"/>
        <dbReference type="Rhea" id="RHEA-COMP:9859"/>
        <dbReference type="Rhea" id="RHEA-COMP:14279"/>
        <dbReference type="ChEBI" id="CHEBI:15377"/>
        <dbReference type="ChEBI" id="CHEBI:15378"/>
        <dbReference type="ChEBI" id="CHEBI:16838"/>
        <dbReference type="ChEBI" id="CHEBI:43474"/>
        <dbReference type="EC" id="3.6.1.11"/>
    </reaction>
</comment>
<comment type="cofactor">
    <cofactor evidence="1">
        <name>a divalent metal cation</name>
        <dbReference type="ChEBI" id="CHEBI:60240"/>
    </cofactor>
    <text evidence="1">Binds 1 divalent metal cation per subunit.</text>
</comment>
<comment type="subcellular location">
    <subcellularLocation>
        <location evidence="1">Cytoplasm</location>
    </subcellularLocation>
</comment>
<comment type="similarity">
    <text evidence="1">Belongs to the SurE nucleotidase family.</text>
</comment>
<comment type="sequence caution" evidence="2">
    <conflict type="erroneous initiation">
        <sequence resource="EMBL-CDS" id="AAN81760"/>
    </conflict>
</comment>
<gene>
    <name evidence="1" type="primary">surE</name>
    <name type="ordered locus">c3311</name>
</gene>
<evidence type="ECO:0000255" key="1">
    <source>
        <dbReference type="HAMAP-Rule" id="MF_00060"/>
    </source>
</evidence>
<evidence type="ECO:0000305" key="2"/>
<name>SURE_ECOL6</name>
<accession>P0A841</accession>
<accession>P36664</accession>
<proteinExistence type="inferred from homology"/>
<organism>
    <name type="scientific">Escherichia coli O6:H1 (strain CFT073 / ATCC 700928 / UPEC)</name>
    <dbReference type="NCBI Taxonomy" id="199310"/>
    <lineage>
        <taxon>Bacteria</taxon>
        <taxon>Pseudomonadati</taxon>
        <taxon>Pseudomonadota</taxon>
        <taxon>Gammaproteobacteria</taxon>
        <taxon>Enterobacterales</taxon>
        <taxon>Enterobacteriaceae</taxon>
        <taxon>Escherichia</taxon>
    </lineage>
</organism>
<protein>
    <recommendedName>
        <fullName evidence="1">5'/3'-nucleotidase SurE</fullName>
        <ecNumber evidence="1">3.1.3.5</ecNumber>
        <ecNumber evidence="1">3.1.3.6</ecNumber>
    </recommendedName>
    <alternativeName>
        <fullName evidence="1">Exopolyphosphatase</fullName>
        <ecNumber evidence="1">3.6.1.11</ecNumber>
    </alternativeName>
    <alternativeName>
        <fullName evidence="1">Nucleoside monophosphate phosphohydrolase</fullName>
    </alternativeName>
</protein>
<feature type="chain" id="PRO_0000111811" description="5'/3'-nucleotidase SurE">
    <location>
        <begin position="1"/>
        <end position="253"/>
    </location>
</feature>
<feature type="binding site" evidence="1">
    <location>
        <position position="8"/>
    </location>
    <ligand>
        <name>a divalent metal cation</name>
        <dbReference type="ChEBI" id="CHEBI:60240"/>
    </ligand>
</feature>
<feature type="binding site" evidence="1">
    <location>
        <position position="9"/>
    </location>
    <ligand>
        <name>a divalent metal cation</name>
        <dbReference type="ChEBI" id="CHEBI:60240"/>
    </ligand>
</feature>
<feature type="binding site" evidence="1">
    <location>
        <position position="39"/>
    </location>
    <ligand>
        <name>a divalent metal cation</name>
        <dbReference type="ChEBI" id="CHEBI:60240"/>
    </ligand>
</feature>
<feature type="binding site" evidence="1">
    <location>
        <position position="92"/>
    </location>
    <ligand>
        <name>a divalent metal cation</name>
        <dbReference type="ChEBI" id="CHEBI:60240"/>
    </ligand>
</feature>
<keyword id="KW-0963">Cytoplasm</keyword>
<keyword id="KW-0378">Hydrolase</keyword>
<keyword id="KW-0479">Metal-binding</keyword>
<keyword id="KW-0547">Nucleotide-binding</keyword>
<keyword id="KW-1185">Reference proteome</keyword>
<reference key="1">
    <citation type="journal article" date="2002" name="Proc. Natl. Acad. Sci. U.S.A.">
        <title>Extensive mosaic structure revealed by the complete genome sequence of uropathogenic Escherichia coli.</title>
        <authorList>
            <person name="Welch R.A."/>
            <person name="Burland V."/>
            <person name="Plunkett G. III"/>
            <person name="Redford P."/>
            <person name="Roesch P."/>
            <person name="Rasko D."/>
            <person name="Buckles E.L."/>
            <person name="Liou S.-R."/>
            <person name="Boutin A."/>
            <person name="Hackett J."/>
            <person name="Stroud D."/>
            <person name="Mayhew G.F."/>
            <person name="Rose D.J."/>
            <person name="Zhou S."/>
            <person name="Schwartz D.C."/>
            <person name="Perna N.T."/>
            <person name="Mobley H.L.T."/>
            <person name="Donnenberg M.S."/>
            <person name="Blattner F.R."/>
        </authorList>
    </citation>
    <scope>NUCLEOTIDE SEQUENCE [LARGE SCALE GENOMIC DNA]</scope>
    <source>
        <strain>CFT073 / ATCC 700928 / UPEC</strain>
    </source>
</reference>
<dbReference type="EC" id="3.1.3.5" evidence="1"/>
<dbReference type="EC" id="3.1.3.6" evidence="1"/>
<dbReference type="EC" id="3.6.1.11" evidence="1"/>
<dbReference type="EMBL" id="AE014075">
    <property type="protein sequence ID" value="AAN81760.1"/>
    <property type="status" value="ALT_INIT"/>
    <property type="molecule type" value="Genomic_DNA"/>
</dbReference>
<dbReference type="RefSeq" id="WP_001295182.1">
    <property type="nucleotide sequence ID" value="NZ_CP051263.1"/>
</dbReference>
<dbReference type="SMR" id="P0A841"/>
<dbReference type="STRING" id="199310.c3311"/>
<dbReference type="GeneID" id="93779262"/>
<dbReference type="KEGG" id="ecc:c3311"/>
<dbReference type="eggNOG" id="COG0496">
    <property type="taxonomic scope" value="Bacteria"/>
</dbReference>
<dbReference type="HOGENOM" id="CLU_045192_1_2_6"/>
<dbReference type="Proteomes" id="UP000001410">
    <property type="component" value="Chromosome"/>
</dbReference>
<dbReference type="GO" id="GO:0005737">
    <property type="term" value="C:cytoplasm"/>
    <property type="evidence" value="ECO:0007669"/>
    <property type="project" value="UniProtKB-SubCell"/>
</dbReference>
<dbReference type="GO" id="GO:0008254">
    <property type="term" value="F:3'-nucleotidase activity"/>
    <property type="evidence" value="ECO:0007669"/>
    <property type="project" value="UniProtKB-UniRule"/>
</dbReference>
<dbReference type="GO" id="GO:0008253">
    <property type="term" value="F:5'-nucleotidase activity"/>
    <property type="evidence" value="ECO:0007669"/>
    <property type="project" value="UniProtKB-UniRule"/>
</dbReference>
<dbReference type="GO" id="GO:0004309">
    <property type="term" value="F:exopolyphosphatase activity"/>
    <property type="evidence" value="ECO:0007669"/>
    <property type="project" value="UniProtKB-UniRule"/>
</dbReference>
<dbReference type="GO" id="GO:0046872">
    <property type="term" value="F:metal ion binding"/>
    <property type="evidence" value="ECO:0007669"/>
    <property type="project" value="UniProtKB-UniRule"/>
</dbReference>
<dbReference type="GO" id="GO:0000166">
    <property type="term" value="F:nucleotide binding"/>
    <property type="evidence" value="ECO:0007669"/>
    <property type="project" value="UniProtKB-KW"/>
</dbReference>
<dbReference type="FunFam" id="3.40.1210.10:FF:000001">
    <property type="entry name" value="5'/3'-nucleotidase SurE"/>
    <property type="match status" value="1"/>
</dbReference>
<dbReference type="Gene3D" id="3.40.1210.10">
    <property type="entry name" value="Survival protein SurE-like phosphatase/nucleotidase"/>
    <property type="match status" value="1"/>
</dbReference>
<dbReference type="HAMAP" id="MF_00060">
    <property type="entry name" value="SurE"/>
    <property type="match status" value="1"/>
</dbReference>
<dbReference type="InterPro" id="IPR030048">
    <property type="entry name" value="SurE"/>
</dbReference>
<dbReference type="InterPro" id="IPR002828">
    <property type="entry name" value="SurE-like_Pase/nucleotidase"/>
</dbReference>
<dbReference type="InterPro" id="IPR036523">
    <property type="entry name" value="SurE-like_sf"/>
</dbReference>
<dbReference type="NCBIfam" id="NF001488">
    <property type="entry name" value="PRK00346.1-1"/>
    <property type="match status" value="1"/>
</dbReference>
<dbReference type="NCBIfam" id="NF001489">
    <property type="entry name" value="PRK00346.1-3"/>
    <property type="match status" value="1"/>
</dbReference>
<dbReference type="NCBIfam" id="NF001490">
    <property type="entry name" value="PRK00346.1-4"/>
    <property type="match status" value="1"/>
</dbReference>
<dbReference type="NCBIfam" id="TIGR00087">
    <property type="entry name" value="surE"/>
    <property type="match status" value="1"/>
</dbReference>
<dbReference type="PANTHER" id="PTHR30457">
    <property type="entry name" value="5'-NUCLEOTIDASE SURE"/>
    <property type="match status" value="1"/>
</dbReference>
<dbReference type="PANTHER" id="PTHR30457:SF12">
    <property type="entry name" value="5'_3'-NUCLEOTIDASE SURE"/>
    <property type="match status" value="1"/>
</dbReference>
<dbReference type="Pfam" id="PF01975">
    <property type="entry name" value="SurE"/>
    <property type="match status" value="1"/>
</dbReference>
<dbReference type="SUPFAM" id="SSF64167">
    <property type="entry name" value="SurE-like"/>
    <property type="match status" value="1"/>
</dbReference>